<keyword id="KW-0031">Aminopeptidase</keyword>
<keyword id="KW-0963">Cytoplasm</keyword>
<keyword id="KW-0378">Hydrolase</keyword>
<keyword id="KW-0479">Metal-binding</keyword>
<keyword id="KW-0482">Metalloprotease</keyword>
<keyword id="KW-0645">Protease</keyword>
<keyword id="KW-0862">Zinc</keyword>
<organism>
    <name type="scientific">Streptococcus pyogenes serotype M49 (strain NZ131)</name>
    <dbReference type="NCBI Taxonomy" id="471876"/>
    <lineage>
        <taxon>Bacteria</taxon>
        <taxon>Bacillati</taxon>
        <taxon>Bacillota</taxon>
        <taxon>Bacilli</taxon>
        <taxon>Lactobacillales</taxon>
        <taxon>Streptococcaceae</taxon>
        <taxon>Streptococcus</taxon>
    </lineage>
</organism>
<name>PEPT_STRPZ</name>
<sequence>MKYDNLLDRFIKYVKVNTRSDPDSETTPSTESQEVFALTILKPEMEAIGLQDVHYNPVNGYLIGTLPANNPTLTRKIGFIAHMDTADFNAENVNPQIIDNYQGGDITLGSSNYKLDPEAFPNLNNYIGQTLITTDGTTLLGADDKSGIAEIMTAIEFLTSQPQIEHCDIKVAFGPDEEIGVGADKFEVADFEVDFAYTMDGGPLGELQYETFSAAALEVTFLGRNVHPGTAKDQMINALQLAIDFHEKLPAKERPEYTDGYQGFYHLTGLTGTVEEARASYIIRDFEEASFEARKVKVENIAQSMNAHLGTKRVLVELNDQYYNMKKVIEKDMTAIELAKEVMEELAIKPVIEPIRGGTDGSKISFMGIPTPNIFAGGENMHGRFEFVSLQTMERAVDVIIGLVCKA</sequence>
<feature type="chain" id="PRO_1000129056" description="Peptidase T">
    <location>
        <begin position="1"/>
        <end position="407"/>
    </location>
</feature>
<feature type="active site" evidence="1">
    <location>
        <position position="84"/>
    </location>
</feature>
<feature type="active site" description="Proton acceptor" evidence="1">
    <location>
        <position position="177"/>
    </location>
</feature>
<feature type="binding site" evidence="1">
    <location>
        <position position="82"/>
    </location>
    <ligand>
        <name>Zn(2+)</name>
        <dbReference type="ChEBI" id="CHEBI:29105"/>
        <label>1</label>
    </ligand>
</feature>
<feature type="binding site" evidence="1">
    <location>
        <position position="143"/>
    </location>
    <ligand>
        <name>Zn(2+)</name>
        <dbReference type="ChEBI" id="CHEBI:29105"/>
        <label>1</label>
    </ligand>
</feature>
<feature type="binding site" evidence="1">
    <location>
        <position position="143"/>
    </location>
    <ligand>
        <name>Zn(2+)</name>
        <dbReference type="ChEBI" id="CHEBI:29105"/>
        <label>2</label>
    </ligand>
</feature>
<feature type="binding site" evidence="1">
    <location>
        <position position="178"/>
    </location>
    <ligand>
        <name>Zn(2+)</name>
        <dbReference type="ChEBI" id="CHEBI:29105"/>
        <label>2</label>
    </ligand>
</feature>
<feature type="binding site" evidence="1">
    <location>
        <position position="200"/>
    </location>
    <ligand>
        <name>Zn(2+)</name>
        <dbReference type="ChEBI" id="CHEBI:29105"/>
        <label>1</label>
    </ligand>
</feature>
<feature type="binding site" evidence="1">
    <location>
        <position position="382"/>
    </location>
    <ligand>
        <name>Zn(2+)</name>
        <dbReference type="ChEBI" id="CHEBI:29105"/>
        <label>2</label>
    </ligand>
</feature>
<reference key="1">
    <citation type="journal article" date="2008" name="J. Bacteriol.">
        <title>Genome sequence of a nephritogenic and highly transformable M49 strain of Streptococcus pyogenes.</title>
        <authorList>
            <person name="McShan W.M."/>
            <person name="Ferretti J.J."/>
            <person name="Karasawa T."/>
            <person name="Suvorov A.N."/>
            <person name="Lin S."/>
            <person name="Qin B."/>
            <person name="Jia H."/>
            <person name="Kenton S."/>
            <person name="Najar F."/>
            <person name="Wu H."/>
            <person name="Scott J."/>
            <person name="Roe B.A."/>
            <person name="Savic D.J."/>
        </authorList>
    </citation>
    <scope>NUCLEOTIDE SEQUENCE [LARGE SCALE GENOMIC DNA]</scope>
    <source>
        <strain>NZ131</strain>
    </source>
</reference>
<comment type="function">
    <text evidence="1">Cleaves the N-terminal amino acid of tripeptides.</text>
</comment>
<comment type="catalytic activity">
    <reaction evidence="1">
        <text>Release of the N-terminal residue from a tripeptide.</text>
        <dbReference type="EC" id="3.4.11.4"/>
    </reaction>
</comment>
<comment type="cofactor">
    <cofactor evidence="1">
        <name>Zn(2+)</name>
        <dbReference type="ChEBI" id="CHEBI:29105"/>
    </cofactor>
    <text evidence="1">Binds 2 Zn(2+) ions per subunit.</text>
</comment>
<comment type="subcellular location">
    <subcellularLocation>
        <location evidence="1">Cytoplasm</location>
    </subcellularLocation>
</comment>
<comment type="similarity">
    <text evidence="1">Belongs to the peptidase M20B family.</text>
</comment>
<protein>
    <recommendedName>
        <fullName evidence="1">Peptidase T</fullName>
        <ecNumber evidence="1">3.4.11.4</ecNumber>
    </recommendedName>
    <alternativeName>
        <fullName evidence="1">Aminotripeptidase</fullName>
        <shortName evidence="1">Tripeptidase</shortName>
    </alternativeName>
    <alternativeName>
        <fullName evidence="1">Tripeptide aminopeptidase</fullName>
    </alternativeName>
</protein>
<evidence type="ECO:0000255" key="1">
    <source>
        <dbReference type="HAMAP-Rule" id="MF_00550"/>
    </source>
</evidence>
<proteinExistence type="inferred from homology"/>
<dbReference type="EC" id="3.4.11.4" evidence="1"/>
<dbReference type="EMBL" id="CP000829">
    <property type="protein sequence ID" value="ACI60945.1"/>
    <property type="molecule type" value="Genomic_DNA"/>
</dbReference>
<dbReference type="SMR" id="B5XKT3"/>
<dbReference type="MEROPS" id="M20.003"/>
<dbReference type="KEGG" id="soz:Spy49_0624"/>
<dbReference type="HOGENOM" id="CLU_053676_0_0_9"/>
<dbReference type="Proteomes" id="UP000001039">
    <property type="component" value="Chromosome"/>
</dbReference>
<dbReference type="GO" id="GO:0005829">
    <property type="term" value="C:cytosol"/>
    <property type="evidence" value="ECO:0007669"/>
    <property type="project" value="TreeGrafter"/>
</dbReference>
<dbReference type="GO" id="GO:0008237">
    <property type="term" value="F:metallopeptidase activity"/>
    <property type="evidence" value="ECO:0007669"/>
    <property type="project" value="UniProtKB-KW"/>
</dbReference>
<dbReference type="GO" id="GO:0045148">
    <property type="term" value="F:tripeptide aminopeptidase activity"/>
    <property type="evidence" value="ECO:0007669"/>
    <property type="project" value="UniProtKB-UniRule"/>
</dbReference>
<dbReference type="GO" id="GO:0008270">
    <property type="term" value="F:zinc ion binding"/>
    <property type="evidence" value="ECO:0007669"/>
    <property type="project" value="UniProtKB-UniRule"/>
</dbReference>
<dbReference type="GO" id="GO:0043171">
    <property type="term" value="P:peptide catabolic process"/>
    <property type="evidence" value="ECO:0007669"/>
    <property type="project" value="UniProtKB-UniRule"/>
</dbReference>
<dbReference type="GO" id="GO:0006508">
    <property type="term" value="P:proteolysis"/>
    <property type="evidence" value="ECO:0007669"/>
    <property type="project" value="UniProtKB-UniRule"/>
</dbReference>
<dbReference type="CDD" id="cd03892">
    <property type="entry name" value="M20_peptT"/>
    <property type="match status" value="1"/>
</dbReference>
<dbReference type="FunFam" id="3.30.70.360:FF:000002">
    <property type="entry name" value="Peptidase T"/>
    <property type="match status" value="1"/>
</dbReference>
<dbReference type="Gene3D" id="3.30.70.360">
    <property type="match status" value="1"/>
</dbReference>
<dbReference type="Gene3D" id="3.40.630.10">
    <property type="entry name" value="Zn peptidases"/>
    <property type="match status" value="1"/>
</dbReference>
<dbReference type="HAMAP" id="MF_00550">
    <property type="entry name" value="Aminopeptidase_M20"/>
    <property type="match status" value="1"/>
</dbReference>
<dbReference type="InterPro" id="IPR001261">
    <property type="entry name" value="ArgE/DapE_CS"/>
</dbReference>
<dbReference type="InterPro" id="IPR036264">
    <property type="entry name" value="Bact_exopeptidase_dim_dom"/>
</dbReference>
<dbReference type="InterPro" id="IPR002933">
    <property type="entry name" value="Peptidase_M20"/>
</dbReference>
<dbReference type="InterPro" id="IPR011650">
    <property type="entry name" value="Peptidase_M20_dimer"/>
</dbReference>
<dbReference type="InterPro" id="IPR010161">
    <property type="entry name" value="Peptidase_M20B"/>
</dbReference>
<dbReference type="NCBIfam" id="TIGR01882">
    <property type="entry name" value="peptidase-T"/>
    <property type="match status" value="1"/>
</dbReference>
<dbReference type="NCBIfam" id="NF003976">
    <property type="entry name" value="PRK05469.1"/>
    <property type="match status" value="1"/>
</dbReference>
<dbReference type="NCBIfam" id="NF009920">
    <property type="entry name" value="PRK13381.1"/>
    <property type="match status" value="1"/>
</dbReference>
<dbReference type="PANTHER" id="PTHR42994">
    <property type="entry name" value="PEPTIDASE T"/>
    <property type="match status" value="1"/>
</dbReference>
<dbReference type="PANTHER" id="PTHR42994:SF1">
    <property type="entry name" value="PEPTIDASE T"/>
    <property type="match status" value="1"/>
</dbReference>
<dbReference type="Pfam" id="PF07687">
    <property type="entry name" value="M20_dimer"/>
    <property type="match status" value="1"/>
</dbReference>
<dbReference type="Pfam" id="PF01546">
    <property type="entry name" value="Peptidase_M20"/>
    <property type="match status" value="1"/>
</dbReference>
<dbReference type="PIRSF" id="PIRSF037215">
    <property type="entry name" value="Peptidase_M20B"/>
    <property type="match status" value="1"/>
</dbReference>
<dbReference type="SUPFAM" id="SSF55031">
    <property type="entry name" value="Bacterial exopeptidase dimerisation domain"/>
    <property type="match status" value="1"/>
</dbReference>
<dbReference type="SUPFAM" id="SSF53187">
    <property type="entry name" value="Zn-dependent exopeptidases"/>
    <property type="match status" value="1"/>
</dbReference>
<dbReference type="PROSITE" id="PS00758">
    <property type="entry name" value="ARGE_DAPE_CPG2_1"/>
    <property type="match status" value="1"/>
</dbReference>
<dbReference type="PROSITE" id="PS00759">
    <property type="entry name" value="ARGE_DAPE_CPG2_2"/>
    <property type="match status" value="1"/>
</dbReference>
<accession>B5XKT3</accession>
<gene>
    <name evidence="1" type="primary">pepT</name>
    <name type="ordered locus">Spy49_0624</name>
</gene>